<keyword id="KW-0413">Isomerase</keyword>
<keyword id="KW-0663">Pyridoxal phosphate</keyword>
<comment type="function">
    <text evidence="1">Catalyzes the interconversion of L-alanine and D-alanine. May also act on other amino acids.</text>
</comment>
<comment type="catalytic activity">
    <reaction evidence="1">
        <text>L-alanine = D-alanine</text>
        <dbReference type="Rhea" id="RHEA:20249"/>
        <dbReference type="ChEBI" id="CHEBI:57416"/>
        <dbReference type="ChEBI" id="CHEBI:57972"/>
        <dbReference type="EC" id="5.1.1.1"/>
    </reaction>
</comment>
<comment type="cofactor">
    <cofactor evidence="1">
        <name>pyridoxal 5'-phosphate</name>
        <dbReference type="ChEBI" id="CHEBI:597326"/>
    </cofactor>
</comment>
<comment type="pathway">
    <text evidence="1">Amino-acid biosynthesis; D-alanine biosynthesis; D-alanine from L-alanine: step 1/1.</text>
</comment>
<comment type="similarity">
    <text evidence="1">Belongs to the alanine racemase family.</text>
</comment>
<feature type="chain" id="PRO_1000066064" description="Alanine racemase">
    <location>
        <begin position="1"/>
        <end position="366"/>
    </location>
</feature>
<feature type="active site" description="Proton acceptor; specific for D-alanine" evidence="1">
    <location>
        <position position="33"/>
    </location>
</feature>
<feature type="active site" description="Proton acceptor; specific for L-alanine" evidence="1">
    <location>
        <position position="253"/>
    </location>
</feature>
<feature type="binding site" evidence="1">
    <location>
        <position position="129"/>
    </location>
    <ligand>
        <name>substrate</name>
    </ligand>
</feature>
<feature type="binding site" evidence="1">
    <location>
        <position position="301"/>
    </location>
    <ligand>
        <name>substrate</name>
    </ligand>
</feature>
<feature type="modified residue" description="N6-(pyridoxal phosphate)lysine" evidence="1">
    <location>
        <position position="33"/>
    </location>
</feature>
<proteinExistence type="inferred from homology"/>
<gene>
    <name type="primary">alr</name>
    <name type="ordered locus">XOO0631</name>
</gene>
<accession>Q2P7U1</accession>
<name>ALR_XANOM</name>
<evidence type="ECO:0000255" key="1">
    <source>
        <dbReference type="HAMAP-Rule" id="MF_01201"/>
    </source>
</evidence>
<reference key="1">
    <citation type="journal article" date="2005" name="Jpn. Agric. Res. Q.">
        <title>Genome sequence of Xanthomonas oryzae pv. oryzae suggests contribution of large numbers of effector genes and insertion sequences to its race diversity.</title>
        <authorList>
            <person name="Ochiai H."/>
            <person name="Inoue Y."/>
            <person name="Takeya M."/>
            <person name="Sasaki A."/>
            <person name="Kaku H."/>
        </authorList>
    </citation>
    <scope>NUCLEOTIDE SEQUENCE [LARGE SCALE GENOMIC DNA]</scope>
    <source>
        <strain>MAFF 311018</strain>
    </source>
</reference>
<dbReference type="EC" id="5.1.1.1" evidence="1"/>
<dbReference type="EMBL" id="AP008229">
    <property type="protein sequence ID" value="BAE67386.1"/>
    <property type="molecule type" value="Genomic_DNA"/>
</dbReference>
<dbReference type="RefSeq" id="WP_011407556.1">
    <property type="nucleotide sequence ID" value="NC_007705.1"/>
</dbReference>
<dbReference type="SMR" id="Q2P7U1"/>
<dbReference type="KEGG" id="xom:XOO0631"/>
<dbReference type="HOGENOM" id="CLU_028393_1_0_6"/>
<dbReference type="UniPathway" id="UPA00042">
    <property type="reaction ID" value="UER00497"/>
</dbReference>
<dbReference type="GO" id="GO:0005829">
    <property type="term" value="C:cytosol"/>
    <property type="evidence" value="ECO:0007669"/>
    <property type="project" value="TreeGrafter"/>
</dbReference>
<dbReference type="GO" id="GO:0008784">
    <property type="term" value="F:alanine racemase activity"/>
    <property type="evidence" value="ECO:0007669"/>
    <property type="project" value="UniProtKB-UniRule"/>
</dbReference>
<dbReference type="GO" id="GO:0030170">
    <property type="term" value="F:pyridoxal phosphate binding"/>
    <property type="evidence" value="ECO:0007669"/>
    <property type="project" value="UniProtKB-UniRule"/>
</dbReference>
<dbReference type="GO" id="GO:0030632">
    <property type="term" value="P:D-alanine biosynthetic process"/>
    <property type="evidence" value="ECO:0007669"/>
    <property type="project" value="UniProtKB-UniRule"/>
</dbReference>
<dbReference type="CDD" id="cd06827">
    <property type="entry name" value="PLPDE_III_AR_proteobact"/>
    <property type="match status" value="1"/>
</dbReference>
<dbReference type="FunFam" id="2.40.37.10:FF:000002">
    <property type="entry name" value="Alanine racemase"/>
    <property type="match status" value="1"/>
</dbReference>
<dbReference type="FunFam" id="3.20.20.10:FF:000002">
    <property type="entry name" value="Alanine racemase"/>
    <property type="match status" value="1"/>
</dbReference>
<dbReference type="Gene3D" id="3.20.20.10">
    <property type="entry name" value="Alanine racemase"/>
    <property type="match status" value="1"/>
</dbReference>
<dbReference type="Gene3D" id="2.40.37.10">
    <property type="entry name" value="Lyase, Ornithine Decarboxylase, Chain A, domain 1"/>
    <property type="match status" value="1"/>
</dbReference>
<dbReference type="HAMAP" id="MF_01201">
    <property type="entry name" value="Ala_racemase"/>
    <property type="match status" value="1"/>
</dbReference>
<dbReference type="InterPro" id="IPR000821">
    <property type="entry name" value="Ala_racemase"/>
</dbReference>
<dbReference type="InterPro" id="IPR009006">
    <property type="entry name" value="Ala_racemase/Decarboxylase_C"/>
</dbReference>
<dbReference type="InterPro" id="IPR011079">
    <property type="entry name" value="Ala_racemase_C"/>
</dbReference>
<dbReference type="InterPro" id="IPR001608">
    <property type="entry name" value="Ala_racemase_N"/>
</dbReference>
<dbReference type="InterPro" id="IPR020622">
    <property type="entry name" value="Ala_racemase_pyridoxalP-BS"/>
</dbReference>
<dbReference type="InterPro" id="IPR029066">
    <property type="entry name" value="PLP-binding_barrel"/>
</dbReference>
<dbReference type="NCBIfam" id="TIGR00492">
    <property type="entry name" value="alr"/>
    <property type="match status" value="1"/>
</dbReference>
<dbReference type="PANTHER" id="PTHR30511">
    <property type="entry name" value="ALANINE RACEMASE"/>
    <property type="match status" value="1"/>
</dbReference>
<dbReference type="PANTHER" id="PTHR30511:SF0">
    <property type="entry name" value="ALANINE RACEMASE, CATABOLIC-RELATED"/>
    <property type="match status" value="1"/>
</dbReference>
<dbReference type="Pfam" id="PF00842">
    <property type="entry name" value="Ala_racemase_C"/>
    <property type="match status" value="1"/>
</dbReference>
<dbReference type="Pfam" id="PF01168">
    <property type="entry name" value="Ala_racemase_N"/>
    <property type="match status" value="1"/>
</dbReference>
<dbReference type="PRINTS" id="PR00992">
    <property type="entry name" value="ALARACEMASE"/>
</dbReference>
<dbReference type="SMART" id="SM01005">
    <property type="entry name" value="Ala_racemase_C"/>
    <property type="match status" value="1"/>
</dbReference>
<dbReference type="SUPFAM" id="SSF50621">
    <property type="entry name" value="Alanine racemase C-terminal domain-like"/>
    <property type="match status" value="1"/>
</dbReference>
<dbReference type="SUPFAM" id="SSF51419">
    <property type="entry name" value="PLP-binding barrel"/>
    <property type="match status" value="1"/>
</dbReference>
<dbReference type="PROSITE" id="PS00395">
    <property type="entry name" value="ALANINE_RACEMASE"/>
    <property type="match status" value="1"/>
</dbReference>
<organism>
    <name type="scientific">Xanthomonas oryzae pv. oryzae (strain MAFF 311018)</name>
    <dbReference type="NCBI Taxonomy" id="342109"/>
    <lineage>
        <taxon>Bacteria</taxon>
        <taxon>Pseudomonadati</taxon>
        <taxon>Pseudomonadota</taxon>
        <taxon>Gammaproteobacteria</taxon>
        <taxon>Lysobacterales</taxon>
        <taxon>Lysobacteraceae</taxon>
        <taxon>Xanthomonas</taxon>
    </lineage>
</organism>
<sequence length="366" mass="39693">MRPAQASIDLEALRHNYRLAKRLGGSKALAVVKADAYGHGAVPCAQALEPEADGFAVACIEEALELRQAGIRAPILLLEGFFEHDELRLIAEHDLWTVAATPQQVRALAAFQSPRPLRVWLKMDSGMHRLGLSPEDFRAAWLRLRGLPQIASLVLMTHLARADELDCSRTDEQAVAFALTAGGMRAETSLRNSPGLLGWPALRNDWSRPGLMLYGANPFPQDTENTAQLRPVMTLRSRIILVRDLPVGEPVGYGARFVAERPTRVGVVAMGYADGYPQFAPNGTPVLVDGQVCPLIGRVSMDMLTVDLTDHPQADIGATVQLWGQAPRVGPLATQCNVSAYQLLCGLKRVPRTYVASAAVGEVAAR</sequence>
<protein>
    <recommendedName>
        <fullName evidence="1">Alanine racemase</fullName>
        <ecNumber evidence="1">5.1.1.1</ecNumber>
    </recommendedName>
</protein>